<comment type="function">
    <text evidence="1">F(1)F(0) ATP synthase produces ATP from ADP in the presence of a proton or sodium gradient. F-type ATPases consist of two structural domains, F(1) containing the extramembraneous catalytic core and F(0) containing the membrane proton channel, linked together by a central stalk and a peripheral stalk. During catalysis, ATP synthesis in the catalytic domain of F(1) is coupled via a rotary mechanism of the central stalk subunits to proton translocation.</text>
</comment>
<comment type="function">
    <text evidence="1">Component of the F(0) channel, it forms part of the peripheral stalk, linking F(1) to F(0).</text>
</comment>
<comment type="subunit">
    <text evidence="1">F-type ATPases have 2 components, F(1) - the catalytic core - and F(0) - the membrane proton channel. F(1) has five subunits: alpha(3), beta(3), gamma(1), delta(1), epsilon(1). F(0) has three main subunits: a(1), b(2) and c(10-14). The alpha and beta chains form an alternating ring which encloses part of the gamma chain. F(1) is attached to F(0) by a central stalk formed by the gamma and epsilon chains, while a peripheral stalk is formed by the delta and b chains.</text>
</comment>
<comment type="subcellular location">
    <subcellularLocation>
        <location evidence="1">Cell membrane</location>
        <topology evidence="1">Single-pass membrane protein</topology>
    </subcellularLocation>
</comment>
<comment type="similarity">
    <text evidence="1">Belongs to the ATPase B chain family.</text>
</comment>
<feature type="chain" id="PRO_0000368792" description="ATP synthase subunit b">
    <location>
        <begin position="1"/>
        <end position="165"/>
    </location>
</feature>
<feature type="transmembrane region" description="Helical" evidence="1">
    <location>
        <begin position="7"/>
        <end position="27"/>
    </location>
</feature>
<reference key="1">
    <citation type="journal article" date="2005" name="Proc. Natl. Acad. Sci. U.S.A.">
        <title>Genome analysis of multiple pathogenic isolates of Streptococcus agalactiae: implications for the microbial 'pan-genome'.</title>
        <authorList>
            <person name="Tettelin H."/>
            <person name="Masignani V."/>
            <person name="Cieslewicz M.J."/>
            <person name="Donati C."/>
            <person name="Medini D."/>
            <person name="Ward N.L."/>
            <person name="Angiuoli S.V."/>
            <person name="Crabtree J."/>
            <person name="Jones A.L."/>
            <person name="Durkin A.S."/>
            <person name="DeBoy R.T."/>
            <person name="Davidsen T.M."/>
            <person name="Mora M."/>
            <person name="Scarselli M."/>
            <person name="Margarit y Ros I."/>
            <person name="Peterson J.D."/>
            <person name="Hauser C.R."/>
            <person name="Sundaram J.P."/>
            <person name="Nelson W.C."/>
            <person name="Madupu R."/>
            <person name="Brinkac L.M."/>
            <person name="Dodson R.J."/>
            <person name="Rosovitz M.J."/>
            <person name="Sullivan S.A."/>
            <person name="Daugherty S.C."/>
            <person name="Haft D.H."/>
            <person name="Selengut J."/>
            <person name="Gwinn M.L."/>
            <person name="Zhou L."/>
            <person name="Zafar N."/>
            <person name="Khouri H."/>
            <person name="Radune D."/>
            <person name="Dimitrov G."/>
            <person name="Watkins K."/>
            <person name="O'Connor K.J."/>
            <person name="Smith S."/>
            <person name="Utterback T.R."/>
            <person name="White O."/>
            <person name="Rubens C.E."/>
            <person name="Grandi G."/>
            <person name="Madoff L.C."/>
            <person name="Kasper D.L."/>
            <person name="Telford J.L."/>
            <person name="Wessels M.R."/>
            <person name="Rappuoli R."/>
            <person name="Fraser C.M."/>
        </authorList>
    </citation>
    <scope>NUCLEOTIDE SEQUENCE [LARGE SCALE GENOMIC DNA]</scope>
    <source>
        <strain>ATCC 27591 / A909 / CDC SS700</strain>
    </source>
</reference>
<keyword id="KW-0066">ATP synthesis</keyword>
<keyword id="KW-1003">Cell membrane</keyword>
<keyword id="KW-0138">CF(0)</keyword>
<keyword id="KW-0375">Hydrogen ion transport</keyword>
<keyword id="KW-0406">Ion transport</keyword>
<keyword id="KW-0472">Membrane</keyword>
<keyword id="KW-0812">Transmembrane</keyword>
<keyword id="KW-1133">Transmembrane helix</keyword>
<keyword id="KW-0813">Transport</keyword>
<proteinExistence type="inferred from homology"/>
<accession>Q3K1J9</accession>
<gene>
    <name evidence="1" type="primary">atpF</name>
    <name type="ordered locus">SAK_0982</name>
</gene>
<name>ATPF_STRA1</name>
<evidence type="ECO:0000255" key="1">
    <source>
        <dbReference type="HAMAP-Rule" id="MF_01398"/>
    </source>
</evidence>
<organism>
    <name type="scientific">Streptococcus agalactiae serotype Ia (strain ATCC 27591 / A909 / CDC SS700)</name>
    <dbReference type="NCBI Taxonomy" id="205921"/>
    <lineage>
        <taxon>Bacteria</taxon>
        <taxon>Bacillati</taxon>
        <taxon>Bacillota</taxon>
        <taxon>Bacilli</taxon>
        <taxon>Lactobacillales</taxon>
        <taxon>Streptococcaceae</taxon>
        <taxon>Streptococcus</taxon>
    </lineage>
</organism>
<sequence>MSILINSTTIGDIIIVSGSVLLLFILIKTFAWKQITGIFEAREQKIANDIDTAEQARQQAEAFATKREEELSNAKTEANQIIDNAKETGLAKGDQIISEAKTEADRLKEKAHQDIAQNKAEALADVKGEVADLTVLLAEKIMVSNLDKEAQSNLIDSYIKKLGDA</sequence>
<protein>
    <recommendedName>
        <fullName evidence="1">ATP synthase subunit b</fullName>
    </recommendedName>
    <alternativeName>
        <fullName evidence="1">ATP synthase F(0) sector subunit b</fullName>
    </alternativeName>
    <alternativeName>
        <fullName evidence="1">ATPase subunit I</fullName>
    </alternativeName>
    <alternativeName>
        <fullName evidence="1">F-type ATPase subunit b</fullName>
        <shortName evidence="1">F-ATPase subunit b</shortName>
    </alternativeName>
</protein>
<dbReference type="EMBL" id="CP000114">
    <property type="protein sequence ID" value="ABA45874.1"/>
    <property type="molecule type" value="Genomic_DNA"/>
</dbReference>
<dbReference type="RefSeq" id="WP_000025478.1">
    <property type="nucleotide sequence ID" value="NC_007432.1"/>
</dbReference>
<dbReference type="SMR" id="Q3K1J9"/>
<dbReference type="GeneID" id="66885809"/>
<dbReference type="KEGG" id="sak:SAK_0982"/>
<dbReference type="HOGENOM" id="CLU_079215_4_2_9"/>
<dbReference type="GO" id="GO:0005886">
    <property type="term" value="C:plasma membrane"/>
    <property type="evidence" value="ECO:0007669"/>
    <property type="project" value="UniProtKB-SubCell"/>
</dbReference>
<dbReference type="GO" id="GO:0045259">
    <property type="term" value="C:proton-transporting ATP synthase complex"/>
    <property type="evidence" value="ECO:0007669"/>
    <property type="project" value="UniProtKB-KW"/>
</dbReference>
<dbReference type="GO" id="GO:0046933">
    <property type="term" value="F:proton-transporting ATP synthase activity, rotational mechanism"/>
    <property type="evidence" value="ECO:0007669"/>
    <property type="project" value="UniProtKB-UniRule"/>
</dbReference>
<dbReference type="GO" id="GO:0046961">
    <property type="term" value="F:proton-transporting ATPase activity, rotational mechanism"/>
    <property type="evidence" value="ECO:0007669"/>
    <property type="project" value="TreeGrafter"/>
</dbReference>
<dbReference type="CDD" id="cd06503">
    <property type="entry name" value="ATP-synt_Fo_b"/>
    <property type="match status" value="1"/>
</dbReference>
<dbReference type="Gene3D" id="6.10.250.1580">
    <property type="match status" value="1"/>
</dbReference>
<dbReference type="HAMAP" id="MF_01398">
    <property type="entry name" value="ATP_synth_b_bprime"/>
    <property type="match status" value="1"/>
</dbReference>
<dbReference type="InterPro" id="IPR028987">
    <property type="entry name" value="ATP_synth_B-like_membr_sf"/>
</dbReference>
<dbReference type="InterPro" id="IPR002146">
    <property type="entry name" value="ATP_synth_b/b'su_bac/chlpt"/>
</dbReference>
<dbReference type="InterPro" id="IPR005864">
    <property type="entry name" value="ATP_synth_F0_bsu_bac"/>
</dbReference>
<dbReference type="InterPro" id="IPR050059">
    <property type="entry name" value="ATP_synthase_B_chain"/>
</dbReference>
<dbReference type="NCBIfam" id="TIGR01144">
    <property type="entry name" value="ATP_synt_b"/>
    <property type="match status" value="1"/>
</dbReference>
<dbReference type="PANTHER" id="PTHR33445:SF1">
    <property type="entry name" value="ATP SYNTHASE SUBUNIT B"/>
    <property type="match status" value="1"/>
</dbReference>
<dbReference type="PANTHER" id="PTHR33445">
    <property type="entry name" value="ATP SYNTHASE SUBUNIT B', CHLOROPLASTIC"/>
    <property type="match status" value="1"/>
</dbReference>
<dbReference type="Pfam" id="PF00430">
    <property type="entry name" value="ATP-synt_B"/>
    <property type="match status" value="1"/>
</dbReference>
<dbReference type="SUPFAM" id="SSF81573">
    <property type="entry name" value="F1F0 ATP synthase subunit B, membrane domain"/>
    <property type="match status" value="1"/>
</dbReference>